<name>RGF1B_XENTR</name>
<proteinExistence type="evidence at transcript level"/>
<keyword id="KW-0344">Guanine-nucleotide releasing factor</keyword>
<keyword id="KW-1185">Reference proteome</keyword>
<comment type="function">
    <text evidence="1">Guanine nucleotide exchange factor (GEF) with specificity for rap2a and other Ras family proteins (in vitro).</text>
</comment>
<gene>
    <name type="primary">rasgef1b</name>
    <name type="ORF">TNeu048b05.1</name>
</gene>
<reference key="1">
    <citation type="submission" date="2006-10" db="EMBL/GenBank/DDBJ databases">
        <authorList>
            <consortium name="Sanger Xenopus tropicalis EST/cDNA project"/>
        </authorList>
    </citation>
    <scope>NUCLEOTIDE SEQUENCE [LARGE SCALE MRNA]</scope>
    <source>
        <tissue>Neurula</tissue>
    </source>
</reference>
<protein>
    <recommendedName>
        <fullName>Ras-GEF domain-containing family member 1B</fullName>
    </recommendedName>
</protein>
<organism>
    <name type="scientific">Xenopus tropicalis</name>
    <name type="common">Western clawed frog</name>
    <name type="synonym">Silurana tropicalis</name>
    <dbReference type="NCBI Taxonomy" id="8364"/>
    <lineage>
        <taxon>Eukaryota</taxon>
        <taxon>Metazoa</taxon>
        <taxon>Chordata</taxon>
        <taxon>Craniata</taxon>
        <taxon>Vertebrata</taxon>
        <taxon>Euteleostomi</taxon>
        <taxon>Amphibia</taxon>
        <taxon>Batrachia</taxon>
        <taxon>Anura</taxon>
        <taxon>Pipoidea</taxon>
        <taxon>Pipidae</taxon>
        <taxon>Xenopodinae</taxon>
        <taxon>Xenopus</taxon>
        <taxon>Silurana</taxon>
    </lineage>
</organism>
<feature type="chain" id="PRO_0000297642" description="Ras-GEF domain-containing family member 1B">
    <location>
        <begin position="1"/>
        <end position="472"/>
    </location>
</feature>
<feature type="domain" description="N-terminal Ras-GEF" evidence="2">
    <location>
        <begin position="34"/>
        <end position="164"/>
    </location>
</feature>
<feature type="domain" description="Ras-GEF" evidence="3">
    <location>
        <begin position="204"/>
        <end position="452"/>
    </location>
</feature>
<dbReference type="EMBL" id="CR848333">
    <property type="protein sequence ID" value="CAJ83352.1"/>
    <property type="molecule type" value="mRNA"/>
</dbReference>
<dbReference type="RefSeq" id="NP_001016913.1">
    <property type="nucleotide sequence ID" value="NM_001016913.2"/>
</dbReference>
<dbReference type="RefSeq" id="XP_031756091.1">
    <property type="nucleotide sequence ID" value="XM_031900231.1"/>
</dbReference>
<dbReference type="SMR" id="Q28EC1"/>
<dbReference type="FunCoup" id="Q28EC1">
    <property type="interactions" value="855"/>
</dbReference>
<dbReference type="STRING" id="8364.ENSXETP00000007296"/>
<dbReference type="PaxDb" id="8364-ENSXETP00000027482"/>
<dbReference type="GeneID" id="549667"/>
<dbReference type="KEGG" id="xtr:549667"/>
<dbReference type="AGR" id="Xenbase:XB-GENE-1015760"/>
<dbReference type="CTD" id="153020"/>
<dbReference type="Xenbase" id="XB-GENE-1015760">
    <property type="gene designation" value="rasgef1b"/>
</dbReference>
<dbReference type="eggNOG" id="KOG3541">
    <property type="taxonomic scope" value="Eukaryota"/>
</dbReference>
<dbReference type="HOGENOM" id="CLU_022907_2_0_1"/>
<dbReference type="InParanoid" id="Q28EC1"/>
<dbReference type="OrthoDB" id="20825at2759"/>
<dbReference type="Proteomes" id="UP000008143">
    <property type="component" value="Chromosome 1"/>
</dbReference>
<dbReference type="GO" id="GO:0005085">
    <property type="term" value="F:guanyl-nucleotide exchange factor activity"/>
    <property type="evidence" value="ECO:0000250"/>
    <property type="project" value="UniProtKB"/>
</dbReference>
<dbReference type="GO" id="GO:0007264">
    <property type="term" value="P:small GTPase-mediated signal transduction"/>
    <property type="evidence" value="ECO:0007669"/>
    <property type="project" value="InterPro"/>
</dbReference>
<dbReference type="CDD" id="cd00155">
    <property type="entry name" value="RasGEF"/>
    <property type="match status" value="1"/>
</dbReference>
<dbReference type="CDD" id="cd06224">
    <property type="entry name" value="REM"/>
    <property type="match status" value="1"/>
</dbReference>
<dbReference type="FunFam" id="1.10.840.10:FF:000008">
    <property type="entry name" value="Ras-GEF domain-containing family member 1B"/>
    <property type="match status" value="1"/>
</dbReference>
<dbReference type="FunFam" id="1.20.870.10:FF:000007">
    <property type="entry name" value="Ras-GEF domain-containing family member 1B"/>
    <property type="match status" value="1"/>
</dbReference>
<dbReference type="Gene3D" id="1.10.840.10">
    <property type="entry name" value="Ras guanine-nucleotide exchange factors catalytic domain"/>
    <property type="match status" value="1"/>
</dbReference>
<dbReference type="Gene3D" id="1.20.870.10">
    <property type="entry name" value="Son of sevenless (SoS) protein Chain: S domain 1"/>
    <property type="match status" value="1"/>
</dbReference>
<dbReference type="InterPro" id="IPR008937">
    <property type="entry name" value="Ras-like_GEF"/>
</dbReference>
<dbReference type="InterPro" id="IPR000651">
    <property type="entry name" value="Ras-like_Gua-exchang_fac_N"/>
</dbReference>
<dbReference type="InterPro" id="IPR019804">
    <property type="entry name" value="Ras_G-nucl-exch_fac_CS"/>
</dbReference>
<dbReference type="InterPro" id="IPR023578">
    <property type="entry name" value="Ras_GEF_dom_sf"/>
</dbReference>
<dbReference type="InterPro" id="IPR001895">
    <property type="entry name" value="RASGEF_cat_dom"/>
</dbReference>
<dbReference type="InterPro" id="IPR036964">
    <property type="entry name" value="RASGEF_cat_dom_sf"/>
</dbReference>
<dbReference type="PANTHER" id="PTHR23113">
    <property type="entry name" value="GUANINE NUCLEOTIDE EXCHANGE FACTOR"/>
    <property type="match status" value="1"/>
</dbReference>
<dbReference type="PANTHER" id="PTHR23113:SF197">
    <property type="entry name" value="RAS-GEF DOMAIN-CONTAINING FAMILY MEMBER 1B"/>
    <property type="match status" value="1"/>
</dbReference>
<dbReference type="Pfam" id="PF00617">
    <property type="entry name" value="RasGEF"/>
    <property type="match status" value="1"/>
</dbReference>
<dbReference type="Pfam" id="PF00618">
    <property type="entry name" value="RasGEF_N"/>
    <property type="match status" value="1"/>
</dbReference>
<dbReference type="SMART" id="SM00147">
    <property type="entry name" value="RasGEF"/>
    <property type="match status" value="1"/>
</dbReference>
<dbReference type="SMART" id="SM00229">
    <property type="entry name" value="RasGEFN"/>
    <property type="match status" value="1"/>
</dbReference>
<dbReference type="SUPFAM" id="SSF48366">
    <property type="entry name" value="Ras GEF"/>
    <property type="match status" value="1"/>
</dbReference>
<dbReference type="PROSITE" id="PS00720">
    <property type="entry name" value="RASGEF"/>
    <property type="match status" value="1"/>
</dbReference>
<dbReference type="PROSITE" id="PS50009">
    <property type="entry name" value="RASGEF_CAT"/>
    <property type="match status" value="1"/>
</dbReference>
<dbReference type="PROSITE" id="PS50212">
    <property type="entry name" value="RASGEF_NTER"/>
    <property type="match status" value="1"/>
</dbReference>
<evidence type="ECO:0000250" key="1"/>
<evidence type="ECO:0000255" key="2">
    <source>
        <dbReference type="PROSITE-ProRule" id="PRU00135"/>
    </source>
</evidence>
<evidence type="ECO:0000255" key="3">
    <source>
        <dbReference type="PROSITE-ProRule" id="PRU00168"/>
    </source>
</evidence>
<sequence length="472" mass="55307">MPQTPTLVAMFDSSSFHRNLYQSKEESCSELYYQDNNLLSGSLEALIQHLVPNVDYYPDRTYIFTFLLSSRLFIHPSELMARVCHVCMEQQRLNEPGLDKSQVRKIAPKILQLLTEWTETFPYDFRDERMMRNLKDTAHRITNGDEMYRKNVQQIIQNLIRKLASLTQYEELITKINAQSTDRMTVLKTKPQSIQRDIITVCSDPYTVAQQLTHIELERLSYIGPEEFVQAFVQKDPLDNNENCYSDRKKPRNLEAYVEWFNRLSYLVATEICMPVKKKHRARMIEFFIDVARECFNIGNFNSLMAIISGMNMSPVSRLKKTWAKVKTAKFDILEHQMDPSSNFYNYRTALRGAAQRSLTAHSNREKIVIPFCSLLIKDIYFLNEGCTSRLPNGHVNFEKFWELAKQVSEFMTWKQVECPFEKDRKILHYVLTAPIFSEDALYLASYESEGPENHIEKDRWKTLRSALLGRA</sequence>
<accession>Q28EC1</accession>